<comment type="function">
    <text evidence="1">Involved in DNA damage response and double-strand break (DSB) repair. Component of the BRCA1-A complex, acting as a central scaffold protein that assembles the various components of the complex and mediates the recruitment of brca1. The BRCA1-A complex specifically recognizes 'Lys-63'-linked ubiquitinated histones H2A and H2AX at DNA lesion sites, leading to target the brca1-bard1 heterodimer to sites of DNA damage at DSBs. This complex also possesses deubiquitinase activity that specifically removes 'Lys-63'-linked ubiquitin on histones H2A and H2AX (By similarity).</text>
</comment>
<comment type="subunit">
    <text evidence="1">Component of the BRCA1-A complex. Component of the BRISC complex. Homodimer. Interacts directly (when phosphorylated at Ser-405) with brca1. The phosphorylated homodimer can interact directly with two brca1 chains, giving rise to a heterotetramer (By similarity).</text>
</comment>
<comment type="subcellular location">
    <subcellularLocation>
        <location evidence="1">Nucleus</location>
    </subcellularLocation>
    <text evidence="1">Localizes at sites of DNA damage at double-strand breaks (DSBs).</text>
</comment>
<comment type="PTM">
    <text evidence="1">Phosphorylation of Ser-405 of the pSXXF motif by ATM or ATR constitutes a specific recognition motif for the BRCT domain of BRCA1.</text>
</comment>
<comment type="similarity">
    <text evidence="5">Belongs to the FAM175 family. Abraxas subfamily.</text>
</comment>
<reference key="1">
    <citation type="submission" date="2004-05" db="EMBL/GenBank/DDBJ databases">
        <authorList>
            <consortium name="NIH - Xenopus Gene Collection (XGC) project"/>
        </authorList>
    </citation>
    <scope>NUCLEOTIDE SEQUENCE [LARGE SCALE MRNA]</scope>
    <source>
        <tissue>Ovary</tissue>
    </source>
</reference>
<feature type="chain" id="PRO_0000278579" description="BRCA1-A complex subunit Abraxas 1">
    <location>
        <begin position="1"/>
        <end position="408"/>
    </location>
</feature>
<feature type="domain" description="MPN" evidence="3">
    <location>
        <begin position="7"/>
        <end position="155"/>
    </location>
</feature>
<feature type="region of interest" description="Disordered" evidence="4">
    <location>
        <begin position="335"/>
        <end position="408"/>
    </location>
</feature>
<feature type="coiled-coil region" evidence="2">
    <location>
        <begin position="210"/>
        <end position="272"/>
    </location>
</feature>
<feature type="short sequence motif" description="pSXXF motif" evidence="5">
    <location>
        <begin position="405"/>
        <end position="408"/>
    </location>
</feature>
<feature type="compositionally biased region" description="Basic residues" evidence="4">
    <location>
        <begin position="337"/>
        <end position="358"/>
    </location>
</feature>
<feature type="compositionally biased region" description="Polar residues" evidence="4">
    <location>
        <begin position="394"/>
        <end position="408"/>
    </location>
</feature>
<feature type="modified residue" description="Phosphoserine" evidence="1">
    <location>
        <position position="405"/>
    </location>
</feature>
<keyword id="KW-0156">Chromatin regulator</keyword>
<keyword id="KW-0175">Coiled coil</keyword>
<keyword id="KW-0227">DNA damage</keyword>
<keyword id="KW-0234">DNA repair</keyword>
<keyword id="KW-0539">Nucleus</keyword>
<keyword id="KW-0597">Phosphoprotein</keyword>
<keyword id="KW-1185">Reference proteome</keyword>
<accession>Q6GR31</accession>
<protein>
    <recommendedName>
        <fullName evidence="1">BRCA1-A complex subunit Abraxas 1</fullName>
    </recommendedName>
    <alternativeName>
        <fullName>Coiled-coil domain-containing protein 98</fullName>
    </alternativeName>
    <alternativeName>
        <fullName>Protein FAM175A</fullName>
    </alternativeName>
</protein>
<organism>
    <name type="scientific">Xenopus laevis</name>
    <name type="common">African clawed frog</name>
    <dbReference type="NCBI Taxonomy" id="8355"/>
    <lineage>
        <taxon>Eukaryota</taxon>
        <taxon>Metazoa</taxon>
        <taxon>Chordata</taxon>
        <taxon>Craniata</taxon>
        <taxon>Vertebrata</taxon>
        <taxon>Euteleostomi</taxon>
        <taxon>Amphibia</taxon>
        <taxon>Batrachia</taxon>
        <taxon>Anura</taxon>
        <taxon>Pipoidea</taxon>
        <taxon>Pipidae</taxon>
        <taxon>Xenopodinae</taxon>
        <taxon>Xenopus</taxon>
        <taxon>Xenopus</taxon>
    </lineage>
</organism>
<gene>
    <name evidence="1" type="primary">abraxas1</name>
    <name type="synonym">abra1</name>
    <name type="synonym">ccdc98</name>
    <name type="synonym">fam175a</name>
</gene>
<evidence type="ECO:0000250" key="1">
    <source>
        <dbReference type="UniProtKB" id="Q6UWZ7"/>
    </source>
</evidence>
<evidence type="ECO:0000255" key="2"/>
<evidence type="ECO:0000255" key="3">
    <source>
        <dbReference type="PROSITE-ProRule" id="PRU01182"/>
    </source>
</evidence>
<evidence type="ECO:0000256" key="4">
    <source>
        <dbReference type="SAM" id="MobiDB-lite"/>
    </source>
</evidence>
<evidence type="ECO:0000305" key="5"/>
<proteinExistence type="evidence at transcript level"/>
<name>ABRX1_XENLA</name>
<sequence>MEGESTTAVISGFVFGALTFHHLNSGSDTEGFLLGDVMGEAKNSITDSQMDDVEVLYTIDIQKHVPCYQLSRFYNALGDLNIPELKKLLAGQKKSQNVIGWYKFRHNTEQIMTFRERLLHKNLQEHFSNSGLVFLLLTSNPATETKSTHRLEYALHKPQDGFFHKVPLVISNLGMSDQQGYKTLCGSCVSVGLNTAIKKHRLEFFNEDGALAEVNRISDMHMTLQEELKKTCSQLVESENSVEQLLEAVNDLKKQIAEKKLLMEEKGNKVSEDTEENVLLCEAFRRFFPQSALLQSCRLSLGGRQIPHSCSVSHNSSDVNELTLMVKQYDFPEAHRRQAGKRKAHSKQLGKTSTKKSRLPPFQRPQSDNSDSESSDSEKLLCTSGTETDGDIVQSLNVEVSRSKSPTF</sequence>
<dbReference type="EMBL" id="BC071103">
    <property type="protein sequence ID" value="AAH71103.1"/>
    <property type="molecule type" value="mRNA"/>
</dbReference>
<dbReference type="RefSeq" id="NP_001085339.1">
    <property type="nucleotide sequence ID" value="NM_001091870.1"/>
</dbReference>
<dbReference type="SMR" id="Q6GR31"/>
<dbReference type="BioGRID" id="101928">
    <property type="interactions" value="1"/>
</dbReference>
<dbReference type="IntAct" id="Q6GR31">
    <property type="interactions" value="1"/>
</dbReference>
<dbReference type="DNASU" id="443765"/>
<dbReference type="GeneID" id="443765"/>
<dbReference type="KEGG" id="xla:443765"/>
<dbReference type="AGR" id="Xenbase:XB-GENE-5730339"/>
<dbReference type="CTD" id="443765"/>
<dbReference type="Xenbase" id="XB-GENE-5730339">
    <property type="gene designation" value="abraxas1.S"/>
</dbReference>
<dbReference type="OMA" id="MEYAAFI"/>
<dbReference type="OrthoDB" id="6358435at2759"/>
<dbReference type="Proteomes" id="UP000186698">
    <property type="component" value="Chromosome 1S"/>
</dbReference>
<dbReference type="Bgee" id="443765">
    <property type="expression patterns" value="Expressed in blastula and 19 other cell types or tissues"/>
</dbReference>
<dbReference type="GO" id="GO:0070531">
    <property type="term" value="C:BRCA1-A complex"/>
    <property type="evidence" value="ECO:0000250"/>
    <property type="project" value="UniProtKB"/>
</dbReference>
<dbReference type="GO" id="GO:0005634">
    <property type="term" value="C:nucleus"/>
    <property type="evidence" value="ECO:0000250"/>
    <property type="project" value="UniProtKB"/>
</dbReference>
<dbReference type="GO" id="GO:0008017">
    <property type="term" value="F:microtubule binding"/>
    <property type="evidence" value="ECO:0000318"/>
    <property type="project" value="GO_Central"/>
</dbReference>
<dbReference type="GO" id="GO:0031593">
    <property type="term" value="F:polyubiquitin modification-dependent protein binding"/>
    <property type="evidence" value="ECO:0000250"/>
    <property type="project" value="UniProtKB"/>
</dbReference>
<dbReference type="GO" id="GO:0008608">
    <property type="term" value="P:attachment of spindle microtubules to kinetochore"/>
    <property type="evidence" value="ECO:0000318"/>
    <property type="project" value="GO_Central"/>
</dbReference>
<dbReference type="GO" id="GO:0006325">
    <property type="term" value="P:chromatin organization"/>
    <property type="evidence" value="ECO:0007669"/>
    <property type="project" value="UniProtKB-KW"/>
</dbReference>
<dbReference type="GO" id="GO:0006302">
    <property type="term" value="P:double-strand break repair"/>
    <property type="evidence" value="ECO:0000250"/>
    <property type="project" value="UniProtKB"/>
</dbReference>
<dbReference type="GO" id="GO:0007095">
    <property type="term" value="P:mitotic G2 DNA damage checkpoint signaling"/>
    <property type="evidence" value="ECO:0000250"/>
    <property type="project" value="UniProtKB"/>
</dbReference>
<dbReference type="GO" id="GO:0090307">
    <property type="term" value="P:mitotic spindle assembly"/>
    <property type="evidence" value="ECO:0000318"/>
    <property type="project" value="GO_Central"/>
</dbReference>
<dbReference type="GO" id="GO:0045739">
    <property type="term" value="P:positive regulation of DNA repair"/>
    <property type="evidence" value="ECO:0000250"/>
    <property type="project" value="UniProtKB"/>
</dbReference>
<dbReference type="GO" id="GO:0070536">
    <property type="term" value="P:protein K63-linked deubiquitination"/>
    <property type="evidence" value="ECO:0007669"/>
    <property type="project" value="TreeGrafter"/>
</dbReference>
<dbReference type="GO" id="GO:0010212">
    <property type="term" value="P:response to ionizing radiation"/>
    <property type="evidence" value="ECO:0000250"/>
    <property type="project" value="UniProtKB"/>
</dbReference>
<dbReference type="CDD" id="cd23523">
    <property type="entry name" value="Abraxas_1"/>
    <property type="match status" value="1"/>
</dbReference>
<dbReference type="InterPro" id="IPR023239">
    <property type="entry name" value="BRISC_Abraxas1"/>
</dbReference>
<dbReference type="InterPro" id="IPR023238">
    <property type="entry name" value="FAM175"/>
</dbReference>
<dbReference type="InterPro" id="IPR037518">
    <property type="entry name" value="MPN"/>
</dbReference>
<dbReference type="PANTHER" id="PTHR31728">
    <property type="entry name" value="ABRAXAS FAMILY MEMBER"/>
    <property type="match status" value="1"/>
</dbReference>
<dbReference type="PANTHER" id="PTHR31728:SF2">
    <property type="entry name" value="BRCA1-A COMPLEX SUBUNIT ABRAXAS 1"/>
    <property type="match status" value="1"/>
</dbReference>
<dbReference type="Pfam" id="PF21125">
    <property type="entry name" value="MPN_2A_DUB_like"/>
    <property type="match status" value="1"/>
</dbReference>
<dbReference type="PRINTS" id="PR02052">
    <property type="entry name" value="ABRAXAS"/>
</dbReference>
<dbReference type="PRINTS" id="PR02051">
    <property type="entry name" value="PROTEINF175"/>
</dbReference>
<dbReference type="PROSITE" id="PS50249">
    <property type="entry name" value="MPN"/>
    <property type="match status" value="1"/>
</dbReference>